<organism>
    <name type="scientific">Xylella fastidiosa (strain M12)</name>
    <dbReference type="NCBI Taxonomy" id="405440"/>
    <lineage>
        <taxon>Bacteria</taxon>
        <taxon>Pseudomonadati</taxon>
        <taxon>Pseudomonadota</taxon>
        <taxon>Gammaproteobacteria</taxon>
        <taxon>Lysobacterales</taxon>
        <taxon>Lysobacteraceae</taxon>
        <taxon>Xylella</taxon>
    </lineage>
</organism>
<gene>
    <name evidence="1" type="primary">glnS</name>
    <name type="ordered locus">Xfasm12_0694</name>
</gene>
<protein>
    <recommendedName>
        <fullName evidence="1">Glutamine--tRNA ligase</fullName>
        <ecNumber evidence="1">6.1.1.18</ecNumber>
    </recommendedName>
    <alternativeName>
        <fullName evidence="1">Glutaminyl-tRNA synthetase</fullName>
        <shortName evidence="1">GlnRS</shortName>
    </alternativeName>
</protein>
<accession>B0U6D0</accession>
<name>SYQ_XYLFM</name>
<reference key="1">
    <citation type="journal article" date="2010" name="J. Bacteriol.">
        <title>Whole genome sequences of two Xylella fastidiosa strains (M12 and M23) causing almond leaf scorch disease in California.</title>
        <authorList>
            <person name="Chen J."/>
            <person name="Xie G."/>
            <person name="Han S."/>
            <person name="Chertkov O."/>
            <person name="Sims D."/>
            <person name="Civerolo E.L."/>
        </authorList>
    </citation>
    <scope>NUCLEOTIDE SEQUENCE [LARGE SCALE GENOMIC DNA]</scope>
    <source>
        <strain>M12</strain>
    </source>
</reference>
<evidence type="ECO:0000255" key="1">
    <source>
        <dbReference type="HAMAP-Rule" id="MF_00126"/>
    </source>
</evidence>
<comment type="catalytic activity">
    <reaction evidence="1">
        <text>tRNA(Gln) + L-glutamine + ATP = L-glutaminyl-tRNA(Gln) + AMP + diphosphate</text>
        <dbReference type="Rhea" id="RHEA:20121"/>
        <dbReference type="Rhea" id="RHEA-COMP:9662"/>
        <dbReference type="Rhea" id="RHEA-COMP:9681"/>
        <dbReference type="ChEBI" id="CHEBI:30616"/>
        <dbReference type="ChEBI" id="CHEBI:33019"/>
        <dbReference type="ChEBI" id="CHEBI:58359"/>
        <dbReference type="ChEBI" id="CHEBI:78442"/>
        <dbReference type="ChEBI" id="CHEBI:78521"/>
        <dbReference type="ChEBI" id="CHEBI:456215"/>
        <dbReference type="EC" id="6.1.1.18"/>
    </reaction>
</comment>
<comment type="subunit">
    <text evidence="1">Monomer.</text>
</comment>
<comment type="subcellular location">
    <subcellularLocation>
        <location evidence="1">Cytoplasm</location>
    </subcellularLocation>
</comment>
<comment type="similarity">
    <text evidence="1">Belongs to the class-I aminoacyl-tRNA synthetase family.</text>
</comment>
<feature type="chain" id="PRO_1000095518" description="Glutamine--tRNA ligase">
    <location>
        <begin position="1"/>
        <end position="580"/>
    </location>
</feature>
<feature type="short sequence motif" description="'HIGH' region" evidence="1">
    <location>
        <begin position="41"/>
        <end position="51"/>
    </location>
</feature>
<feature type="short sequence motif" description="'KMSKS' region" evidence="1">
    <location>
        <begin position="292"/>
        <end position="296"/>
    </location>
</feature>
<feature type="binding site" evidence="1">
    <location>
        <begin position="42"/>
        <end position="44"/>
    </location>
    <ligand>
        <name>ATP</name>
        <dbReference type="ChEBI" id="CHEBI:30616"/>
    </ligand>
</feature>
<feature type="binding site" evidence="1">
    <location>
        <begin position="48"/>
        <end position="54"/>
    </location>
    <ligand>
        <name>ATP</name>
        <dbReference type="ChEBI" id="CHEBI:30616"/>
    </ligand>
</feature>
<feature type="binding site" evidence="1">
    <location>
        <position position="74"/>
    </location>
    <ligand>
        <name>L-glutamine</name>
        <dbReference type="ChEBI" id="CHEBI:58359"/>
    </ligand>
</feature>
<feature type="binding site" evidence="1">
    <location>
        <position position="218"/>
    </location>
    <ligand>
        <name>L-glutamine</name>
        <dbReference type="ChEBI" id="CHEBI:58359"/>
    </ligand>
</feature>
<feature type="binding site" evidence="1">
    <location>
        <position position="237"/>
    </location>
    <ligand>
        <name>ATP</name>
        <dbReference type="ChEBI" id="CHEBI:30616"/>
    </ligand>
</feature>
<feature type="binding site" evidence="1">
    <location>
        <begin position="285"/>
        <end position="286"/>
    </location>
    <ligand>
        <name>ATP</name>
        <dbReference type="ChEBI" id="CHEBI:30616"/>
    </ligand>
</feature>
<feature type="binding site" evidence="1">
    <location>
        <begin position="293"/>
        <end position="295"/>
    </location>
    <ligand>
        <name>ATP</name>
        <dbReference type="ChEBI" id="CHEBI:30616"/>
    </ligand>
</feature>
<sequence>MSEITTTDAQAQPEKKDFIRQIIREDLAHGTHTHIHTRFPPEPNGYLHIGHAKAICLDFGVAAEFGGHCTLRMDDTNPSKEDPAFAAAIQEDVSWLGFHWNALRHTSDYFEVLYLAAEKLIADGKAYVCDLNSEQVREYRGTLTEAGRPSPWRERSPDENLELFRQMRAGTFPDGTRTLRAKIDMASGNINLRDPALYRIKHVEHQNTGNTWPIYPMYDFAHALSDAIEGITHSLCTLEFEDHRPLYDWCINHVDLPNNSHLLKPLLDKGFPQEPSQPRQIEFSRLNINYTVMSKRKLTALVDEKLVEGWDDPRMYTLQGLRRRGYTPAAMRLFVERIGISKQNSIIDFSVLENCLRENLDTIAPRRMATIAPMKLVLTNLPEDHEEQLIFPNHPKDDTQGTRTVPFSRELWIERDDFSEVPPKGWKRLVPGGEVRLRGAGIARIDEVVKNAEGHIIALHGWLDPTSRPGMEGAHRKVKGTIHWVSAPHAVAAEIRLYDRLFSIEKPDDNTDGKTYRDFLNPDSKRVVHGYIEPAAAQTAPEHAFQFERLGYFVTDRHDHDATHPVFNRSVTLRDTWQRD</sequence>
<proteinExistence type="inferred from homology"/>
<dbReference type="EC" id="6.1.1.18" evidence="1"/>
<dbReference type="EMBL" id="CP000941">
    <property type="protein sequence ID" value="ACA11692.1"/>
    <property type="molecule type" value="Genomic_DNA"/>
</dbReference>
<dbReference type="RefSeq" id="WP_004083872.1">
    <property type="nucleotide sequence ID" value="NC_010513.1"/>
</dbReference>
<dbReference type="SMR" id="B0U6D0"/>
<dbReference type="KEGG" id="xfm:Xfasm12_0694"/>
<dbReference type="HOGENOM" id="CLU_001882_2_3_6"/>
<dbReference type="GO" id="GO:0005829">
    <property type="term" value="C:cytosol"/>
    <property type="evidence" value="ECO:0007669"/>
    <property type="project" value="TreeGrafter"/>
</dbReference>
<dbReference type="GO" id="GO:0005524">
    <property type="term" value="F:ATP binding"/>
    <property type="evidence" value="ECO:0007669"/>
    <property type="project" value="UniProtKB-UniRule"/>
</dbReference>
<dbReference type="GO" id="GO:0004819">
    <property type="term" value="F:glutamine-tRNA ligase activity"/>
    <property type="evidence" value="ECO:0007669"/>
    <property type="project" value="UniProtKB-UniRule"/>
</dbReference>
<dbReference type="GO" id="GO:0006425">
    <property type="term" value="P:glutaminyl-tRNA aminoacylation"/>
    <property type="evidence" value="ECO:0007669"/>
    <property type="project" value="InterPro"/>
</dbReference>
<dbReference type="GO" id="GO:0006424">
    <property type="term" value="P:glutamyl-tRNA aminoacylation"/>
    <property type="evidence" value="ECO:0007669"/>
    <property type="project" value="UniProtKB-UniRule"/>
</dbReference>
<dbReference type="FunFam" id="1.10.1160.10:FF:000001">
    <property type="entry name" value="Glutamine--tRNA ligase"/>
    <property type="match status" value="1"/>
</dbReference>
<dbReference type="FunFam" id="2.40.240.10:FF:000020">
    <property type="entry name" value="Glutamine--tRNA ligase"/>
    <property type="match status" value="1"/>
</dbReference>
<dbReference type="FunFam" id="3.90.800.10:FF:000001">
    <property type="entry name" value="Glutamine--tRNA ligase"/>
    <property type="match status" value="1"/>
</dbReference>
<dbReference type="FunFam" id="3.40.50.620:FF:000037">
    <property type="entry name" value="Glutamine--tRNA ligase cytoplasmic"/>
    <property type="match status" value="1"/>
</dbReference>
<dbReference type="Gene3D" id="1.10.1160.10">
    <property type="entry name" value="Glutamyl-trna Synthetase, Domain 2"/>
    <property type="match status" value="1"/>
</dbReference>
<dbReference type="Gene3D" id="3.90.800.10">
    <property type="entry name" value="Glutamyl-tRNA Synthetase, Domain 3"/>
    <property type="match status" value="1"/>
</dbReference>
<dbReference type="Gene3D" id="3.40.50.620">
    <property type="entry name" value="HUPs"/>
    <property type="match status" value="1"/>
</dbReference>
<dbReference type="Gene3D" id="2.40.240.10">
    <property type="entry name" value="Ribosomal Protein L25, Chain P"/>
    <property type="match status" value="2"/>
</dbReference>
<dbReference type="HAMAP" id="MF_00126">
    <property type="entry name" value="Gln_tRNA_synth"/>
    <property type="match status" value="1"/>
</dbReference>
<dbReference type="InterPro" id="IPR004514">
    <property type="entry name" value="Gln-tRNA-synth"/>
</dbReference>
<dbReference type="InterPro" id="IPR050132">
    <property type="entry name" value="Gln/Glu-tRNA_Ligase"/>
</dbReference>
<dbReference type="InterPro" id="IPR022861">
    <property type="entry name" value="Gln_tRNA_ligase_bac"/>
</dbReference>
<dbReference type="InterPro" id="IPR000924">
    <property type="entry name" value="Glu/Gln-tRNA-synth"/>
</dbReference>
<dbReference type="InterPro" id="IPR020058">
    <property type="entry name" value="Glu/Gln-tRNA-synth_Ib_cat-dom"/>
</dbReference>
<dbReference type="InterPro" id="IPR020059">
    <property type="entry name" value="Glu/Gln-tRNA-synth_Ib_codon-bd"/>
</dbReference>
<dbReference type="InterPro" id="IPR020061">
    <property type="entry name" value="Glu_tRNA_lig_a-bdl"/>
</dbReference>
<dbReference type="InterPro" id="IPR020056">
    <property type="entry name" value="Rbsml_bL25/Gln-tRNA_synth_N"/>
</dbReference>
<dbReference type="InterPro" id="IPR011035">
    <property type="entry name" value="Ribosomal_bL25/Gln-tRNA_synth"/>
</dbReference>
<dbReference type="InterPro" id="IPR014729">
    <property type="entry name" value="Rossmann-like_a/b/a_fold"/>
</dbReference>
<dbReference type="InterPro" id="IPR049437">
    <property type="entry name" value="tRNA-synt_1c_C2"/>
</dbReference>
<dbReference type="NCBIfam" id="TIGR00440">
    <property type="entry name" value="glnS"/>
    <property type="match status" value="1"/>
</dbReference>
<dbReference type="NCBIfam" id="NF011291">
    <property type="entry name" value="PRK14703.1"/>
    <property type="match status" value="1"/>
</dbReference>
<dbReference type="PANTHER" id="PTHR43097:SF5">
    <property type="entry name" value="GLUTAMATE--TRNA LIGASE"/>
    <property type="match status" value="1"/>
</dbReference>
<dbReference type="PANTHER" id="PTHR43097">
    <property type="entry name" value="GLUTAMINE-TRNA LIGASE"/>
    <property type="match status" value="1"/>
</dbReference>
<dbReference type="Pfam" id="PF00749">
    <property type="entry name" value="tRNA-synt_1c"/>
    <property type="match status" value="2"/>
</dbReference>
<dbReference type="Pfam" id="PF03950">
    <property type="entry name" value="tRNA-synt_1c_C"/>
    <property type="match status" value="1"/>
</dbReference>
<dbReference type="Pfam" id="PF20974">
    <property type="entry name" value="tRNA-synt_1c_C2"/>
    <property type="match status" value="1"/>
</dbReference>
<dbReference type="PRINTS" id="PR00987">
    <property type="entry name" value="TRNASYNTHGLU"/>
</dbReference>
<dbReference type="SUPFAM" id="SSF52374">
    <property type="entry name" value="Nucleotidylyl transferase"/>
    <property type="match status" value="1"/>
</dbReference>
<dbReference type="SUPFAM" id="SSF50715">
    <property type="entry name" value="Ribosomal protein L25-like"/>
    <property type="match status" value="1"/>
</dbReference>
<dbReference type="PROSITE" id="PS00178">
    <property type="entry name" value="AA_TRNA_LIGASE_I"/>
    <property type="match status" value="1"/>
</dbReference>
<keyword id="KW-0030">Aminoacyl-tRNA synthetase</keyword>
<keyword id="KW-0067">ATP-binding</keyword>
<keyword id="KW-0963">Cytoplasm</keyword>
<keyword id="KW-0436">Ligase</keyword>
<keyword id="KW-0547">Nucleotide-binding</keyword>
<keyword id="KW-0648">Protein biosynthesis</keyword>